<accession>Q9ULX3</accession>
<accession>Q7L6B7</accession>
<accession>Q7M4M4</accession>
<accession>Q7Z4B5</accession>
<accession>Q9NWB0</accession>
<feature type="initiator methionine" description="Removed" evidence="8">
    <location>
        <position position="1"/>
    </location>
</feature>
<feature type="chain" id="PRO_0000233265" description="RNA-binding protein NOB1">
    <location>
        <begin position="2"/>
        <end position="412"/>
    </location>
</feature>
<feature type="domain" description="PINc" evidence="2">
    <location>
        <begin position="5"/>
        <end position="108"/>
    </location>
</feature>
<feature type="zinc finger region" description="NOB1" evidence="2">
    <location>
        <begin position="260"/>
        <end position="332"/>
    </location>
</feature>
<feature type="region of interest" description="Disordered" evidence="3">
    <location>
        <begin position="180"/>
        <end position="208"/>
    </location>
</feature>
<feature type="compositionally biased region" description="Acidic residues" evidence="3">
    <location>
        <begin position="182"/>
        <end position="193"/>
    </location>
</feature>
<feature type="binding site" evidence="7 11 12">
    <location>
        <position position="270"/>
    </location>
    <ligand>
        <name>Zn(2+)</name>
        <dbReference type="ChEBI" id="CHEBI:29105"/>
    </ligand>
</feature>
<feature type="binding site" evidence="7 11 12">
    <location>
        <position position="273"/>
    </location>
    <ligand>
        <name>Zn(2+)</name>
        <dbReference type="ChEBI" id="CHEBI:29105"/>
    </ligand>
</feature>
<feature type="binding site" evidence="7 11 12">
    <location>
        <position position="285"/>
    </location>
    <ligand>
        <name>Zn(2+)</name>
        <dbReference type="ChEBI" id="CHEBI:29105"/>
    </ligand>
</feature>
<feature type="binding site" evidence="7 11 12">
    <location>
        <position position="288"/>
    </location>
    <ligand>
        <name>Zn(2+)</name>
        <dbReference type="ChEBI" id="CHEBI:29105"/>
    </ligand>
</feature>
<feature type="modified residue" description="Phosphoserine" evidence="16 17 18 19">
    <location>
        <position position="184"/>
    </location>
</feature>
<feature type="modified residue" description="Phosphoserine" evidence="13 14 15 16 17 18 19 20">
    <location>
        <position position="201"/>
    </location>
</feature>
<feature type="modified residue" description="Phosphoserine" evidence="19">
    <location>
        <position position="325"/>
    </location>
</feature>
<feature type="modified residue" description="Phosphoserine" evidence="14 19">
    <location>
        <position position="352"/>
    </location>
</feature>
<feature type="sequence variant" id="VAR_050287" description="In dbSNP:rs3811348." evidence="6">
    <original>R</original>
    <variation>Q</variation>
    <location>
        <position position="231"/>
    </location>
</feature>
<feature type="sequence variant" id="VAR_050288" description="In dbSNP:rs1075935.">
    <original>Y</original>
    <variation>F</variation>
    <location>
        <position position="366"/>
    </location>
</feature>
<feature type="sequence conflict" description="In Ref. 6; AAQ13705." evidence="9" ref="6">
    <original>F</original>
    <variation>L</variation>
    <location>
        <position position="408"/>
    </location>
</feature>
<feature type="helix" evidence="22">
    <location>
        <begin position="11"/>
        <end position="15"/>
    </location>
</feature>
<feature type="turn" evidence="22">
    <location>
        <begin position="21"/>
        <end position="23"/>
    </location>
</feature>
<feature type="helix" evidence="22">
    <location>
        <begin position="32"/>
        <end position="35"/>
    </location>
</feature>
<feature type="helix" evidence="22">
    <location>
        <begin position="40"/>
        <end position="46"/>
    </location>
</feature>
<feature type="helix" evidence="21">
    <location>
        <begin position="49"/>
        <end position="52"/>
    </location>
</feature>
<feature type="strand" evidence="21">
    <location>
        <begin position="53"/>
        <end position="55"/>
    </location>
</feature>
<feature type="helix" evidence="22">
    <location>
        <begin position="60"/>
        <end position="70"/>
    </location>
</feature>
<feature type="turn" evidence="22">
    <location>
        <begin position="71"/>
        <end position="74"/>
    </location>
</feature>
<feature type="turn" evidence="24">
    <location>
        <begin position="76"/>
        <end position="78"/>
    </location>
</feature>
<feature type="helix" evidence="22">
    <location>
        <begin position="81"/>
        <end position="97"/>
    </location>
</feature>
<feature type="helix" evidence="21">
    <location>
        <begin position="100"/>
        <end position="102"/>
    </location>
</feature>
<feature type="strand" evidence="22">
    <location>
        <begin position="114"/>
        <end position="117"/>
    </location>
</feature>
<feature type="strand" evidence="22">
    <location>
        <begin position="126"/>
        <end position="129"/>
    </location>
</feature>
<feature type="turn" evidence="22">
    <location>
        <begin position="211"/>
        <end position="216"/>
    </location>
</feature>
<feature type="strand" evidence="23">
    <location>
        <begin position="218"/>
        <end position="220"/>
    </location>
</feature>
<feature type="helix" evidence="22">
    <location>
        <begin position="239"/>
        <end position="248"/>
    </location>
</feature>
<feature type="strand" evidence="22">
    <location>
        <begin position="255"/>
        <end position="259"/>
    </location>
</feature>
<feature type="strand" evidence="22">
    <location>
        <begin position="262"/>
        <end position="270"/>
    </location>
</feature>
<feature type="turn" evidence="22">
    <location>
        <begin position="271"/>
        <end position="273"/>
    </location>
</feature>
<feature type="strand" evidence="21">
    <location>
        <begin position="276"/>
        <end position="278"/>
    </location>
</feature>
<feature type="turn" evidence="22">
    <location>
        <begin position="286"/>
        <end position="288"/>
    </location>
</feature>
<feature type="strand" evidence="22">
    <location>
        <begin position="293"/>
        <end position="301"/>
    </location>
</feature>
<feature type="strand" evidence="25">
    <location>
        <begin position="302"/>
        <end position="304"/>
    </location>
</feature>
<feature type="strand" evidence="22">
    <location>
        <begin position="306"/>
        <end position="311"/>
    </location>
</feature>
<feature type="turn" evidence="22">
    <location>
        <begin position="314"/>
        <end position="317"/>
    </location>
</feature>
<feature type="helix" evidence="21">
    <location>
        <begin position="320"/>
        <end position="322"/>
    </location>
</feature>
<feature type="strand" evidence="22">
    <location>
        <begin position="332"/>
        <end position="334"/>
    </location>
</feature>
<feature type="strand" evidence="21">
    <location>
        <begin position="341"/>
        <end position="343"/>
    </location>
</feature>
<feature type="turn" evidence="22">
    <location>
        <begin position="353"/>
        <end position="356"/>
    </location>
</feature>
<feature type="strand" evidence="23">
    <location>
        <begin position="361"/>
        <end position="363"/>
    </location>
</feature>
<feature type="helix" evidence="22">
    <location>
        <begin position="364"/>
        <end position="366"/>
    </location>
</feature>
<feature type="strand" evidence="22">
    <location>
        <begin position="370"/>
        <end position="373"/>
    </location>
</feature>
<feature type="helix" evidence="22">
    <location>
        <begin position="381"/>
        <end position="384"/>
    </location>
</feature>
<feature type="strand" evidence="23">
    <location>
        <begin position="390"/>
        <end position="393"/>
    </location>
</feature>
<feature type="helix" evidence="22">
    <location>
        <begin position="394"/>
        <end position="397"/>
    </location>
</feature>
<feature type="strand" evidence="24">
    <location>
        <begin position="401"/>
        <end position="403"/>
    </location>
</feature>
<organism>
    <name type="scientific">Homo sapiens</name>
    <name type="common">Human</name>
    <dbReference type="NCBI Taxonomy" id="9606"/>
    <lineage>
        <taxon>Eukaryota</taxon>
        <taxon>Metazoa</taxon>
        <taxon>Chordata</taxon>
        <taxon>Craniata</taxon>
        <taxon>Vertebrata</taxon>
        <taxon>Euteleostomi</taxon>
        <taxon>Mammalia</taxon>
        <taxon>Eutheria</taxon>
        <taxon>Euarchontoglires</taxon>
        <taxon>Primates</taxon>
        <taxon>Haplorrhini</taxon>
        <taxon>Catarrhini</taxon>
        <taxon>Hominidae</taxon>
        <taxon>Homo</taxon>
    </lineage>
</organism>
<name>NOB1_HUMAN</name>
<protein>
    <recommendedName>
        <fullName>RNA-binding protein NOB1</fullName>
        <ecNumber evidence="1">3.1.-.-</ecNumber>
    </recommendedName>
    <alternativeName>
        <fullName>Phosphorylation regulatory protein HP-10</fullName>
    </alternativeName>
    <alternativeName>
        <fullName>Protein ART-4</fullName>
    </alternativeName>
</protein>
<reference key="1">
    <citation type="submission" date="1999-04" db="EMBL/GenBank/DDBJ databases">
        <title>Adenocarcinoma antigen recognized by T lymphocytes-4 (ART-4).</title>
        <authorList>
            <person name="Kawano K."/>
        </authorList>
    </citation>
    <scope>NUCLEOTIDE SEQUENCE [MRNA]</scope>
</reference>
<reference key="2">
    <citation type="journal article" date="2005" name="Mol. Biol. Rep.">
        <title>Cloning, expression and characterization of the human NOB1 gene.</title>
        <authorList>
            <person name="Zhang Y."/>
            <person name="Ni J."/>
            <person name="Zhou G."/>
            <person name="Yuan J."/>
            <person name="Ren W."/>
            <person name="Shan Y."/>
            <person name="Tang W."/>
            <person name="Yu L."/>
            <person name="Zhao S."/>
        </authorList>
    </citation>
    <scope>NUCLEOTIDE SEQUENCE [MRNA]</scope>
    <scope>SUBCELLULAR LOCATION</scope>
    <scope>TISSUE SPECIFICITY</scope>
    <source>
        <tissue>Kidney</tissue>
    </source>
</reference>
<reference key="3">
    <citation type="journal article" date="2004" name="Nat. Genet.">
        <title>Complete sequencing and characterization of 21,243 full-length human cDNAs.</title>
        <authorList>
            <person name="Ota T."/>
            <person name="Suzuki Y."/>
            <person name="Nishikawa T."/>
            <person name="Otsuki T."/>
            <person name="Sugiyama T."/>
            <person name="Irie R."/>
            <person name="Wakamatsu A."/>
            <person name="Hayashi K."/>
            <person name="Sato H."/>
            <person name="Nagai K."/>
            <person name="Kimura K."/>
            <person name="Makita H."/>
            <person name="Sekine M."/>
            <person name="Obayashi M."/>
            <person name="Nishi T."/>
            <person name="Shibahara T."/>
            <person name="Tanaka T."/>
            <person name="Ishii S."/>
            <person name="Yamamoto J."/>
            <person name="Saito K."/>
            <person name="Kawai Y."/>
            <person name="Isono Y."/>
            <person name="Nakamura Y."/>
            <person name="Nagahari K."/>
            <person name="Murakami K."/>
            <person name="Yasuda T."/>
            <person name="Iwayanagi T."/>
            <person name="Wagatsuma M."/>
            <person name="Shiratori A."/>
            <person name="Sudo H."/>
            <person name="Hosoiri T."/>
            <person name="Kaku Y."/>
            <person name="Kodaira H."/>
            <person name="Kondo H."/>
            <person name="Sugawara M."/>
            <person name="Takahashi M."/>
            <person name="Kanda K."/>
            <person name="Yokoi T."/>
            <person name="Furuya T."/>
            <person name="Kikkawa E."/>
            <person name="Omura Y."/>
            <person name="Abe K."/>
            <person name="Kamihara K."/>
            <person name="Katsuta N."/>
            <person name="Sato K."/>
            <person name="Tanikawa M."/>
            <person name="Yamazaki M."/>
            <person name="Ninomiya K."/>
            <person name="Ishibashi T."/>
            <person name="Yamashita H."/>
            <person name="Murakawa K."/>
            <person name="Fujimori K."/>
            <person name="Tanai H."/>
            <person name="Kimata M."/>
            <person name="Watanabe M."/>
            <person name="Hiraoka S."/>
            <person name="Chiba Y."/>
            <person name="Ishida S."/>
            <person name="Ono Y."/>
            <person name="Takiguchi S."/>
            <person name="Watanabe S."/>
            <person name="Yosida M."/>
            <person name="Hotuta T."/>
            <person name="Kusano J."/>
            <person name="Kanehori K."/>
            <person name="Takahashi-Fujii A."/>
            <person name="Hara H."/>
            <person name="Tanase T.-O."/>
            <person name="Nomura Y."/>
            <person name="Togiya S."/>
            <person name="Komai F."/>
            <person name="Hara R."/>
            <person name="Takeuchi K."/>
            <person name="Arita M."/>
            <person name="Imose N."/>
            <person name="Musashino K."/>
            <person name="Yuuki H."/>
            <person name="Oshima A."/>
            <person name="Sasaki N."/>
            <person name="Aotsuka S."/>
            <person name="Yoshikawa Y."/>
            <person name="Matsunawa H."/>
            <person name="Ichihara T."/>
            <person name="Shiohata N."/>
            <person name="Sano S."/>
            <person name="Moriya S."/>
            <person name="Momiyama H."/>
            <person name="Satoh N."/>
            <person name="Takami S."/>
            <person name="Terashima Y."/>
            <person name="Suzuki O."/>
            <person name="Nakagawa S."/>
            <person name="Senoh A."/>
            <person name="Mizoguchi H."/>
            <person name="Goto Y."/>
            <person name="Shimizu F."/>
            <person name="Wakebe H."/>
            <person name="Hishigaki H."/>
            <person name="Watanabe T."/>
            <person name="Sugiyama A."/>
            <person name="Takemoto M."/>
            <person name="Kawakami B."/>
            <person name="Yamazaki M."/>
            <person name="Watanabe K."/>
            <person name="Kumagai A."/>
            <person name="Itakura S."/>
            <person name="Fukuzumi Y."/>
            <person name="Fujimori Y."/>
            <person name="Komiyama M."/>
            <person name="Tashiro H."/>
            <person name="Tanigami A."/>
            <person name="Fujiwara T."/>
            <person name="Ono T."/>
            <person name="Yamada K."/>
            <person name="Fujii Y."/>
            <person name="Ozaki K."/>
            <person name="Hirao M."/>
            <person name="Ohmori Y."/>
            <person name="Kawabata A."/>
            <person name="Hikiji T."/>
            <person name="Kobatake N."/>
            <person name="Inagaki H."/>
            <person name="Ikema Y."/>
            <person name="Okamoto S."/>
            <person name="Okitani R."/>
            <person name="Kawakami T."/>
            <person name="Noguchi S."/>
            <person name="Itoh T."/>
            <person name="Shigeta K."/>
            <person name="Senba T."/>
            <person name="Matsumura K."/>
            <person name="Nakajima Y."/>
            <person name="Mizuno T."/>
            <person name="Morinaga M."/>
            <person name="Sasaki M."/>
            <person name="Togashi T."/>
            <person name="Oyama M."/>
            <person name="Hata H."/>
            <person name="Watanabe M."/>
            <person name="Komatsu T."/>
            <person name="Mizushima-Sugano J."/>
            <person name="Satoh T."/>
            <person name="Shirai Y."/>
            <person name="Takahashi Y."/>
            <person name="Nakagawa K."/>
            <person name="Okumura K."/>
            <person name="Nagase T."/>
            <person name="Nomura N."/>
            <person name="Kikuchi H."/>
            <person name="Masuho Y."/>
            <person name="Yamashita R."/>
            <person name="Nakai K."/>
            <person name="Yada T."/>
            <person name="Nakamura Y."/>
            <person name="Ohara O."/>
            <person name="Isogai T."/>
            <person name="Sugano S."/>
        </authorList>
    </citation>
    <scope>NUCLEOTIDE SEQUENCE [LARGE SCALE MRNA]</scope>
    <source>
        <tissue>Embryo</tissue>
    </source>
</reference>
<reference key="4">
    <citation type="journal article" date="2004" name="Genome Res.">
        <title>The status, quality, and expansion of the NIH full-length cDNA project: the Mammalian Gene Collection (MGC).</title>
        <authorList>
            <consortium name="The MGC Project Team"/>
        </authorList>
    </citation>
    <scope>NUCLEOTIDE SEQUENCE [LARGE SCALE MRNA]</scope>
    <source>
        <tissue>Duodenum</tissue>
        <tissue>Placenta</tissue>
    </source>
</reference>
<reference key="5">
    <citation type="submission" date="2007-07" db="UniProtKB">
        <authorList>
            <person name="Bienvenut W.V."/>
            <person name="Boldt K."/>
            <person name="von Kriegsheim A.F."/>
            <person name="Kolch W."/>
        </authorList>
    </citation>
    <scope>PROTEIN SEQUENCE OF 2-25; 32-38; 46-54; 65-71; 162-178 AND 324-330</scope>
    <scope>CLEAVAGE OF INITIATOR METHIONINE</scope>
    <scope>IDENTIFICATION BY MASS SPECTROMETRY</scope>
    <source>
        <tissue>Hepatoma</tissue>
    </source>
</reference>
<reference key="6">
    <citation type="submission" date="1999-09" db="EMBL/GenBank/DDBJ databases">
        <title>Homo sapiens normal aorta mRNA MST158, complete cds.</title>
        <authorList>
            <person name="Liu B."/>
            <person name="Qin B.M."/>
            <person name="Sheng H."/>
            <person name="Zhao B."/>
            <person name="Liu Y.Q."/>
            <person name="Wang X.Y."/>
            <person name="Zhang Q."/>
            <person name="Song L."/>
            <person name="Liu B.H."/>
            <person name="Lu H."/>
            <person name="Hui R.T."/>
        </authorList>
    </citation>
    <scope>NUCLEOTIDE SEQUENCE [LARGE SCALE MRNA] OF 6-412</scope>
    <source>
        <tissue>Aorta</tissue>
    </source>
</reference>
<reference key="7">
    <citation type="journal article" date="1991" name="Mol. Cell. Biochem.">
        <title>Cloning and expression of a new human polypeptide which regulates protein phosphorylation in Escherichia coli.</title>
        <authorList>
            <person name="Daniele A."/>
            <person name="Altruda F."/>
            <person name="Ferrone M."/>
            <person name="Silengo L."/>
            <person name="Chiarantini L."/>
            <person name="Bianchi M."/>
            <person name="Stocchi V."/>
            <person name="Magnani M."/>
        </authorList>
    </citation>
    <scope>PRELIMINARY NUCLEOTIDE SEQUENCE [MRNA] OF 14-412</scope>
    <scope>TISSUE SPECIFICITY</scope>
    <scope>VARIANT GLN-231</scope>
    <source>
        <tissue>Placenta</tissue>
    </source>
</reference>
<reference key="8">
    <citation type="journal article" date="2004" name="Genome Res.">
        <title>A protein interaction framework for human mRNA degradation.</title>
        <authorList>
            <person name="Lehner B."/>
            <person name="Sanderson C.M."/>
        </authorList>
    </citation>
    <scope>INTERACTION WITH UPF2</scope>
</reference>
<reference key="9">
    <citation type="journal article" date="2006" name="Cell">
        <title>Global, in vivo, and site-specific phosphorylation dynamics in signaling networks.</title>
        <authorList>
            <person name="Olsen J.V."/>
            <person name="Blagoev B."/>
            <person name="Gnad F."/>
            <person name="Macek B."/>
            <person name="Kumar C."/>
            <person name="Mortensen P."/>
            <person name="Mann M."/>
        </authorList>
    </citation>
    <scope>PHOSPHORYLATION [LARGE SCALE ANALYSIS] AT SER-201</scope>
    <scope>IDENTIFICATION BY MASS SPECTROMETRY [LARGE SCALE ANALYSIS]</scope>
    <source>
        <tissue>Cervix carcinoma</tissue>
    </source>
</reference>
<reference key="10">
    <citation type="journal article" date="2008" name="Mol. Cell">
        <title>Kinase-selective enrichment enables quantitative phosphoproteomics of the kinome across the cell cycle.</title>
        <authorList>
            <person name="Daub H."/>
            <person name="Olsen J.V."/>
            <person name="Bairlein M."/>
            <person name="Gnad F."/>
            <person name="Oppermann F.S."/>
            <person name="Korner R."/>
            <person name="Greff Z."/>
            <person name="Keri G."/>
            <person name="Stemmann O."/>
            <person name="Mann M."/>
        </authorList>
    </citation>
    <scope>PHOSPHORYLATION [LARGE SCALE ANALYSIS] AT SER-201</scope>
    <scope>IDENTIFICATION BY MASS SPECTROMETRY [LARGE SCALE ANALYSIS]</scope>
    <source>
        <tissue>Cervix carcinoma</tissue>
    </source>
</reference>
<reference key="11">
    <citation type="journal article" date="2008" name="Proc. Natl. Acad. Sci. U.S.A.">
        <title>A quantitative atlas of mitotic phosphorylation.</title>
        <authorList>
            <person name="Dephoure N."/>
            <person name="Zhou C."/>
            <person name="Villen J."/>
            <person name="Beausoleil S.A."/>
            <person name="Bakalarski C.E."/>
            <person name="Elledge S.J."/>
            <person name="Gygi S.P."/>
        </authorList>
    </citation>
    <scope>PHOSPHORYLATION [LARGE SCALE ANALYSIS] AT SER-201 AND SER-352</scope>
    <scope>IDENTIFICATION BY MASS SPECTROMETRY [LARGE SCALE ANALYSIS]</scope>
    <source>
        <tissue>Cervix carcinoma</tissue>
    </source>
</reference>
<reference key="12">
    <citation type="journal article" date="2009" name="Anal. Chem.">
        <title>Lys-N and trypsin cover complementary parts of the phosphoproteome in a refined SCX-based approach.</title>
        <authorList>
            <person name="Gauci S."/>
            <person name="Helbig A.O."/>
            <person name="Slijper M."/>
            <person name="Krijgsveld J."/>
            <person name="Heck A.J."/>
            <person name="Mohammed S."/>
        </authorList>
    </citation>
    <scope>IDENTIFICATION BY MASS SPECTROMETRY [LARGE SCALE ANALYSIS]</scope>
</reference>
<reference key="13">
    <citation type="journal article" date="2009" name="Sci. Signal.">
        <title>Quantitative phosphoproteomic analysis of T cell receptor signaling reveals system-wide modulation of protein-protein interactions.</title>
        <authorList>
            <person name="Mayya V."/>
            <person name="Lundgren D.H."/>
            <person name="Hwang S.-I."/>
            <person name="Rezaul K."/>
            <person name="Wu L."/>
            <person name="Eng J.K."/>
            <person name="Rodionov V."/>
            <person name="Han D.K."/>
        </authorList>
    </citation>
    <scope>PHOSPHORYLATION [LARGE SCALE ANALYSIS] AT SER-184 AND SER-201</scope>
    <scope>IDENTIFICATION BY MASS SPECTROMETRY [LARGE SCALE ANALYSIS]</scope>
    <source>
        <tissue>Leukemic T-cell</tissue>
    </source>
</reference>
<reference key="14">
    <citation type="journal article" date="2010" name="Sci. Signal.">
        <title>Quantitative phosphoproteomics reveals widespread full phosphorylation site occupancy during mitosis.</title>
        <authorList>
            <person name="Olsen J.V."/>
            <person name="Vermeulen M."/>
            <person name="Santamaria A."/>
            <person name="Kumar C."/>
            <person name="Miller M.L."/>
            <person name="Jensen L.J."/>
            <person name="Gnad F."/>
            <person name="Cox J."/>
            <person name="Jensen T.S."/>
            <person name="Nigg E.A."/>
            <person name="Brunak S."/>
            <person name="Mann M."/>
        </authorList>
    </citation>
    <scope>PHOSPHORYLATION [LARGE SCALE ANALYSIS] AT SER-184 AND SER-201</scope>
    <scope>IDENTIFICATION BY MASS SPECTROMETRY [LARGE SCALE ANALYSIS]</scope>
    <source>
        <tissue>Cervix carcinoma</tissue>
    </source>
</reference>
<reference key="15">
    <citation type="journal article" date="2011" name="BMC Syst. Biol.">
        <title>Initial characterization of the human central proteome.</title>
        <authorList>
            <person name="Burkard T.R."/>
            <person name="Planyavsky M."/>
            <person name="Kaupe I."/>
            <person name="Breitwieser F.P."/>
            <person name="Buerckstuemmer T."/>
            <person name="Bennett K.L."/>
            <person name="Superti-Furga G."/>
            <person name="Colinge J."/>
        </authorList>
    </citation>
    <scope>IDENTIFICATION BY MASS SPECTROMETRY [LARGE SCALE ANALYSIS]</scope>
</reference>
<reference key="16">
    <citation type="journal article" date="2011" name="Sci. Signal.">
        <title>System-wide temporal characterization of the proteome and phosphoproteome of human embryonic stem cell differentiation.</title>
        <authorList>
            <person name="Rigbolt K.T."/>
            <person name="Prokhorova T.A."/>
            <person name="Akimov V."/>
            <person name="Henningsen J."/>
            <person name="Johansen P.T."/>
            <person name="Kratchmarova I."/>
            <person name="Kassem M."/>
            <person name="Mann M."/>
            <person name="Olsen J.V."/>
            <person name="Blagoev B."/>
        </authorList>
    </citation>
    <scope>PHOSPHORYLATION [LARGE SCALE ANALYSIS] AT SER-184 AND SER-201</scope>
    <scope>IDENTIFICATION BY MASS SPECTROMETRY [LARGE SCALE ANALYSIS]</scope>
</reference>
<reference key="17">
    <citation type="journal article" date="2013" name="J. Proteome Res.">
        <title>Toward a comprehensive characterization of a human cancer cell phosphoproteome.</title>
        <authorList>
            <person name="Zhou H."/>
            <person name="Di Palma S."/>
            <person name="Preisinger C."/>
            <person name="Peng M."/>
            <person name="Polat A.N."/>
            <person name="Heck A.J."/>
            <person name="Mohammed S."/>
        </authorList>
    </citation>
    <scope>PHOSPHORYLATION [LARGE SCALE ANALYSIS] AT SER-184; SER-201; SER-325 AND SER-352</scope>
    <scope>IDENTIFICATION BY MASS SPECTROMETRY [LARGE SCALE ANALYSIS]</scope>
    <source>
        <tissue>Cervix carcinoma</tissue>
        <tissue>Erythroleukemia</tissue>
    </source>
</reference>
<reference key="18">
    <citation type="journal article" date="2014" name="J. Proteomics">
        <title>An enzyme assisted RP-RPLC approach for in-depth analysis of human liver phosphoproteome.</title>
        <authorList>
            <person name="Bian Y."/>
            <person name="Song C."/>
            <person name="Cheng K."/>
            <person name="Dong M."/>
            <person name="Wang F."/>
            <person name="Huang J."/>
            <person name="Sun D."/>
            <person name="Wang L."/>
            <person name="Ye M."/>
            <person name="Zou H."/>
        </authorList>
    </citation>
    <scope>PHOSPHORYLATION [LARGE SCALE ANALYSIS] AT SER-201</scope>
    <scope>IDENTIFICATION BY MASS SPECTROMETRY [LARGE SCALE ANALYSIS]</scope>
    <source>
        <tissue>Liver</tissue>
    </source>
</reference>
<reference key="19">
    <citation type="journal article" date="2018" name="Nature">
        <title>Visualizing late states of human 40S ribosomal subunit maturation.</title>
        <authorList>
            <person name="Ameismeier M."/>
            <person name="Cheng J."/>
            <person name="Berninghausen O."/>
            <person name="Beckmann R."/>
        </authorList>
    </citation>
    <scope>STRUCTURE BY ELECTRON MICROSCOPY (3.50 ANGSTROMS) IN COMPLEX WITH ZINC IONS</scope>
    <scope>SUBUNIT</scope>
</reference>
<proteinExistence type="evidence at protein level"/>
<keyword id="KW-0002">3D-structure</keyword>
<keyword id="KW-0903">Direct protein sequencing</keyword>
<keyword id="KW-0255">Endonuclease</keyword>
<keyword id="KW-0378">Hydrolase</keyword>
<keyword id="KW-0479">Metal-binding</keyword>
<keyword id="KW-0540">Nuclease</keyword>
<keyword id="KW-0539">Nucleus</keyword>
<keyword id="KW-0597">Phosphoprotein</keyword>
<keyword id="KW-1267">Proteomics identification</keyword>
<keyword id="KW-1185">Reference proteome</keyword>
<keyword id="KW-0862">Zinc</keyword>
<keyword id="KW-0863">Zinc-finger</keyword>
<dbReference type="EC" id="3.1.-.-" evidence="1"/>
<dbReference type="EMBL" id="AB026125">
    <property type="protein sequence ID" value="BAA86961.1"/>
    <property type="molecule type" value="mRNA"/>
</dbReference>
<dbReference type="EMBL" id="AY487344">
    <property type="protein sequence ID" value="AAR85357.1"/>
    <property type="molecule type" value="mRNA"/>
</dbReference>
<dbReference type="EMBL" id="AK001028">
    <property type="protein sequence ID" value="BAA91473.1"/>
    <property type="status" value="ALT_FRAME"/>
    <property type="molecule type" value="mRNA"/>
</dbReference>
<dbReference type="EMBL" id="BC000050">
    <property type="protein sequence ID" value="AAH00050.2"/>
    <property type="molecule type" value="mRNA"/>
</dbReference>
<dbReference type="EMBL" id="BC064630">
    <property type="protein sequence ID" value="AAH64630.1"/>
    <property type="molecule type" value="mRNA"/>
</dbReference>
<dbReference type="EMBL" id="AF190161">
    <property type="protein sequence ID" value="AAQ13705.1"/>
    <property type="status" value="ALT_FRAME"/>
    <property type="molecule type" value="mRNA"/>
</dbReference>
<dbReference type="CCDS" id="CCDS10884.1"/>
<dbReference type="PIR" id="A61382">
    <property type="entry name" value="A61382"/>
</dbReference>
<dbReference type="RefSeq" id="NP_054781.1">
    <property type="nucleotide sequence ID" value="NM_014062.3"/>
</dbReference>
<dbReference type="PDB" id="6G18">
    <property type="method" value="EM"/>
    <property type="resolution" value="3.60 A"/>
    <property type="chains" value="y=1-412"/>
</dbReference>
<dbReference type="PDB" id="6G4S">
    <property type="method" value="EM"/>
    <property type="resolution" value="4.00 A"/>
    <property type="chains" value="y=1-412"/>
</dbReference>
<dbReference type="PDB" id="6G51">
    <property type="method" value="EM"/>
    <property type="resolution" value="4.10 A"/>
    <property type="chains" value="y=1-412"/>
</dbReference>
<dbReference type="PDB" id="6G53">
    <property type="method" value="EM"/>
    <property type="resolution" value="4.50 A"/>
    <property type="chains" value="y=1-412"/>
</dbReference>
<dbReference type="PDB" id="6G5I">
    <property type="method" value="EM"/>
    <property type="resolution" value="3.50 A"/>
    <property type="chains" value="y=1-412"/>
</dbReference>
<dbReference type="PDB" id="6ZUO">
    <property type="method" value="EM"/>
    <property type="resolution" value="3.10 A"/>
    <property type="chains" value="y=1-412"/>
</dbReference>
<dbReference type="PDB" id="6ZXD">
    <property type="method" value="EM"/>
    <property type="resolution" value="3.20 A"/>
    <property type="chains" value="y=1-412"/>
</dbReference>
<dbReference type="PDB" id="6ZXE">
    <property type="method" value="EM"/>
    <property type="resolution" value="3.00 A"/>
    <property type="chains" value="y=1-412"/>
</dbReference>
<dbReference type="PDB" id="6ZXF">
    <property type="method" value="EM"/>
    <property type="resolution" value="3.70 A"/>
    <property type="chains" value="y=1-412"/>
</dbReference>
<dbReference type="PDB" id="7WTW">
    <property type="method" value="EM"/>
    <property type="resolution" value="3.20 A"/>
    <property type="chains" value="y=1-412"/>
</dbReference>
<dbReference type="PDB" id="7WTX">
    <property type="method" value="EM"/>
    <property type="resolution" value="3.10 A"/>
    <property type="chains" value="y=1-412"/>
</dbReference>
<dbReference type="PDB" id="7WTZ">
    <property type="method" value="EM"/>
    <property type="resolution" value="3.00 A"/>
    <property type="chains" value="y=1-412"/>
</dbReference>
<dbReference type="PDB" id="7WU0">
    <property type="method" value="EM"/>
    <property type="resolution" value="3.30 A"/>
    <property type="chains" value="y=1-412"/>
</dbReference>
<dbReference type="PDB" id="8ZDC">
    <property type="method" value="EM"/>
    <property type="resolution" value="3.80 A"/>
    <property type="chains" value="y=1-412"/>
</dbReference>
<dbReference type="PDBsum" id="6G18"/>
<dbReference type="PDBsum" id="6G4S"/>
<dbReference type="PDBsum" id="6G51"/>
<dbReference type="PDBsum" id="6G53"/>
<dbReference type="PDBsum" id="6G5I"/>
<dbReference type="PDBsum" id="6ZUO"/>
<dbReference type="PDBsum" id="6ZXD"/>
<dbReference type="PDBsum" id="6ZXE"/>
<dbReference type="PDBsum" id="6ZXF"/>
<dbReference type="PDBsum" id="7WTW"/>
<dbReference type="PDBsum" id="7WTX"/>
<dbReference type="PDBsum" id="7WTZ"/>
<dbReference type="PDBsum" id="7WU0"/>
<dbReference type="PDBsum" id="8ZDC"/>
<dbReference type="EMDB" id="EMD-11440"/>
<dbReference type="EMDB" id="EMD-11517"/>
<dbReference type="EMDB" id="EMD-11518"/>
<dbReference type="EMDB" id="EMD-11519"/>
<dbReference type="EMDB" id="EMD-32803"/>
<dbReference type="EMDB" id="EMD-32804"/>
<dbReference type="EMDB" id="EMD-32806"/>
<dbReference type="EMDB" id="EMD-32807"/>
<dbReference type="EMDB" id="EMD-39957"/>
<dbReference type="EMDB" id="EMD-4337"/>
<dbReference type="EMDB" id="EMD-4348"/>
<dbReference type="EMDB" id="EMD-4350"/>
<dbReference type="EMDB" id="EMD-4351"/>
<dbReference type="EMDB" id="EMD-4353"/>
<dbReference type="SMR" id="Q9ULX3"/>
<dbReference type="BioGRID" id="118808">
    <property type="interactions" value="130"/>
</dbReference>
<dbReference type="FunCoup" id="Q9ULX3">
    <property type="interactions" value="2779"/>
</dbReference>
<dbReference type="IntAct" id="Q9ULX3">
    <property type="interactions" value="58"/>
</dbReference>
<dbReference type="MINT" id="Q9ULX3"/>
<dbReference type="STRING" id="9606.ENSP00000268802"/>
<dbReference type="iPTMnet" id="Q9ULX3"/>
<dbReference type="PhosphoSitePlus" id="Q9ULX3"/>
<dbReference type="SwissPalm" id="Q9ULX3"/>
<dbReference type="BioMuta" id="NOB1"/>
<dbReference type="DMDM" id="74753398"/>
<dbReference type="jPOST" id="Q9ULX3"/>
<dbReference type="MassIVE" id="Q9ULX3"/>
<dbReference type="PaxDb" id="9606-ENSP00000268802"/>
<dbReference type="PeptideAtlas" id="Q9ULX3"/>
<dbReference type="ProteomicsDB" id="85145"/>
<dbReference type="Pumba" id="Q9ULX3"/>
<dbReference type="Antibodypedia" id="29888">
    <property type="antibodies" value="261 antibodies from 26 providers"/>
</dbReference>
<dbReference type="DNASU" id="28987"/>
<dbReference type="Ensembl" id="ENST00000268802.10">
    <property type="protein sequence ID" value="ENSP00000268802.5"/>
    <property type="gene ID" value="ENSG00000141101.13"/>
</dbReference>
<dbReference type="GeneID" id="28987"/>
<dbReference type="KEGG" id="hsa:28987"/>
<dbReference type="MANE-Select" id="ENST00000268802.10">
    <property type="protein sequence ID" value="ENSP00000268802.5"/>
    <property type="RefSeq nucleotide sequence ID" value="NM_014062.3"/>
    <property type="RefSeq protein sequence ID" value="NP_054781.1"/>
</dbReference>
<dbReference type="UCSC" id="uc002exs.5">
    <property type="organism name" value="human"/>
</dbReference>
<dbReference type="AGR" id="HGNC:29540"/>
<dbReference type="CTD" id="28987"/>
<dbReference type="DisGeNET" id="28987"/>
<dbReference type="GeneCards" id="NOB1"/>
<dbReference type="HGNC" id="HGNC:29540">
    <property type="gene designation" value="NOB1"/>
</dbReference>
<dbReference type="HPA" id="ENSG00000141101">
    <property type="expression patterns" value="Low tissue specificity"/>
</dbReference>
<dbReference type="MIM" id="613586">
    <property type="type" value="gene"/>
</dbReference>
<dbReference type="neXtProt" id="NX_Q9ULX3"/>
<dbReference type="OpenTargets" id="ENSG00000141101"/>
<dbReference type="PharmGKB" id="PA143485585"/>
<dbReference type="VEuPathDB" id="HostDB:ENSG00000141101"/>
<dbReference type="eggNOG" id="KOG2463">
    <property type="taxonomic scope" value="Eukaryota"/>
</dbReference>
<dbReference type="GeneTree" id="ENSGT00390000015857"/>
<dbReference type="HOGENOM" id="CLU_024666_0_0_1"/>
<dbReference type="InParanoid" id="Q9ULX3"/>
<dbReference type="OMA" id="GYELECE"/>
<dbReference type="OrthoDB" id="446759at2759"/>
<dbReference type="PAN-GO" id="Q9ULX3">
    <property type="GO annotations" value="3 GO annotations based on evolutionary models"/>
</dbReference>
<dbReference type="PhylomeDB" id="Q9ULX3"/>
<dbReference type="TreeFam" id="TF105838"/>
<dbReference type="PathwayCommons" id="Q9ULX3"/>
<dbReference type="Reactome" id="R-HSA-6791226">
    <property type="pathway name" value="Major pathway of rRNA processing in the nucleolus and cytosol"/>
</dbReference>
<dbReference type="SignaLink" id="Q9ULX3"/>
<dbReference type="BioGRID-ORCS" id="28987">
    <property type="hits" value="708 hits in 1164 CRISPR screens"/>
</dbReference>
<dbReference type="CD-CODE" id="91857CE7">
    <property type="entry name" value="Nucleolus"/>
</dbReference>
<dbReference type="GeneWiki" id="NOB1"/>
<dbReference type="GenomeRNAi" id="28987"/>
<dbReference type="Pharos" id="Q9ULX3">
    <property type="development level" value="Tbio"/>
</dbReference>
<dbReference type="PRO" id="PR:Q9ULX3"/>
<dbReference type="Proteomes" id="UP000005640">
    <property type="component" value="Chromosome 16"/>
</dbReference>
<dbReference type="RNAct" id="Q9ULX3">
    <property type="molecule type" value="protein"/>
</dbReference>
<dbReference type="Bgee" id="ENSG00000141101">
    <property type="expression patterns" value="Expressed in body of pancreas and 104 other cell types or tissues"/>
</dbReference>
<dbReference type="ExpressionAtlas" id="Q9ULX3">
    <property type="expression patterns" value="baseline and differential"/>
</dbReference>
<dbReference type="GO" id="GO:0005829">
    <property type="term" value="C:cytosol"/>
    <property type="evidence" value="ECO:0000304"/>
    <property type="project" value="Reactome"/>
</dbReference>
<dbReference type="GO" id="GO:0005654">
    <property type="term" value="C:nucleoplasm"/>
    <property type="evidence" value="ECO:0000304"/>
    <property type="project" value="Reactome"/>
</dbReference>
<dbReference type="GO" id="GO:0030688">
    <property type="term" value="C:preribosome, small subunit precursor"/>
    <property type="evidence" value="ECO:0000318"/>
    <property type="project" value="GO_Central"/>
</dbReference>
<dbReference type="GO" id="GO:0004521">
    <property type="term" value="F:RNA endonuclease activity"/>
    <property type="evidence" value="ECO:0000269"/>
    <property type="project" value="Reactome"/>
</dbReference>
<dbReference type="GO" id="GO:0008270">
    <property type="term" value="F:zinc ion binding"/>
    <property type="evidence" value="ECO:0007669"/>
    <property type="project" value="UniProtKB-KW"/>
</dbReference>
<dbReference type="GO" id="GO:0030490">
    <property type="term" value="P:maturation of SSU-rRNA"/>
    <property type="evidence" value="ECO:0000318"/>
    <property type="project" value="GO_Central"/>
</dbReference>
<dbReference type="GO" id="GO:0006364">
    <property type="term" value="P:rRNA processing"/>
    <property type="evidence" value="ECO:0000304"/>
    <property type="project" value="Reactome"/>
</dbReference>
<dbReference type="GO" id="GO:0007601">
    <property type="term" value="P:visual perception"/>
    <property type="evidence" value="ECO:0007669"/>
    <property type="project" value="Ensembl"/>
</dbReference>
<dbReference type="CDD" id="cd09876">
    <property type="entry name" value="PIN_Nob1-like"/>
    <property type="match status" value="1"/>
</dbReference>
<dbReference type="FunFam" id="3.40.50.1010:FF:000018">
    <property type="entry name" value="RNA-binding protein NOB1"/>
    <property type="match status" value="1"/>
</dbReference>
<dbReference type="Gene3D" id="3.40.50.1010">
    <property type="entry name" value="5'-nuclease"/>
    <property type="match status" value="1"/>
</dbReference>
<dbReference type="Gene3D" id="6.20.210.10">
    <property type="entry name" value="Nin one binding (NOB1), Zn-ribbon-like"/>
    <property type="match status" value="1"/>
</dbReference>
<dbReference type="InterPro" id="IPR039907">
    <property type="entry name" value="NOB1"/>
</dbReference>
<dbReference type="InterPro" id="IPR017117">
    <property type="entry name" value="Nob1_euk"/>
</dbReference>
<dbReference type="InterPro" id="IPR036283">
    <property type="entry name" value="NOB1_Zf-like_sf"/>
</dbReference>
<dbReference type="InterPro" id="IPR014881">
    <property type="entry name" value="NOB1_Zn-bd"/>
</dbReference>
<dbReference type="InterPro" id="IPR002716">
    <property type="entry name" value="PIN_dom"/>
</dbReference>
<dbReference type="InterPro" id="IPR033411">
    <property type="entry name" value="Ribonuclease_PIN"/>
</dbReference>
<dbReference type="InterPro" id="IPR033461">
    <property type="entry name" value="WRNPLPNID"/>
</dbReference>
<dbReference type="PANTHER" id="PTHR12814">
    <property type="entry name" value="RNA-BINDING PROTEIN NOB1"/>
    <property type="match status" value="1"/>
</dbReference>
<dbReference type="PANTHER" id="PTHR12814:SF2">
    <property type="entry name" value="RNA-BINDING PROTEIN NOB1"/>
    <property type="match status" value="1"/>
</dbReference>
<dbReference type="Pfam" id="PF17146">
    <property type="entry name" value="PIN_6"/>
    <property type="match status" value="1"/>
</dbReference>
<dbReference type="Pfam" id="PF15017">
    <property type="entry name" value="WRNPLPNID"/>
    <property type="match status" value="1"/>
</dbReference>
<dbReference type="Pfam" id="PF08772">
    <property type="entry name" value="Zn_ribbon_NOB1"/>
    <property type="match status" value="1"/>
</dbReference>
<dbReference type="PIRSF" id="PIRSF037125">
    <property type="entry name" value="D-site_20S_pre-rRNA_nuclease"/>
    <property type="match status" value="1"/>
</dbReference>
<dbReference type="SMART" id="SM00670">
    <property type="entry name" value="PINc"/>
    <property type="match status" value="1"/>
</dbReference>
<dbReference type="SUPFAM" id="SSF144206">
    <property type="entry name" value="NOB1 zinc finger-like"/>
    <property type="match status" value="1"/>
</dbReference>
<gene>
    <name type="primary">NOB1</name>
    <name type="synonym">ART4</name>
    <name type="synonym">NOB1P</name>
    <name type="synonym">PSMD8BP1</name>
    <name type="ORF">MSTP158</name>
</gene>
<comment type="function">
    <text evidence="1 9">May play a role in mRNA degradation (Probable). Endonuclease required for processing of 20S pre-rRNA precursor and biogenesis of 40S ribosomal subunits (By similarity).</text>
</comment>
<comment type="subunit">
    <text evidence="4 10">Interacts with UPF2 (Probable). Component of the small ribosomal subunit, ribosomal RNA processing complex (SSU RRP complex) (PubMed:15231747).</text>
</comment>
<comment type="interaction">
    <interactant intactId="EBI-373285">
        <id>Q9ULX3</id>
    </interactant>
    <interactant intactId="EBI-712787">
        <id>Q9NRX1</id>
        <label>PNO1</label>
    </interactant>
    <organismsDiffer>false</organismsDiffer>
    <experiments>5</experiments>
</comment>
<comment type="subcellular location">
    <subcellularLocation>
        <location evidence="5">Nucleus</location>
    </subcellularLocation>
</comment>
<comment type="tissue specificity">
    <text evidence="5 6">Detected in liver, lung, placenta, endothelial cells and spleen.</text>
</comment>
<comment type="similarity">
    <text evidence="9">Belongs to the NOB1 family.</text>
</comment>
<comment type="sequence caution" evidence="9">
    <conflict type="frameshift">
        <sequence resource="EMBL-CDS" id="AAQ13705"/>
    </conflict>
</comment>
<comment type="sequence caution" evidence="9">
    <conflict type="frameshift">
        <sequence resource="EMBL-CDS" id="BAA91473"/>
    </conflict>
</comment>
<sequence length="412" mass="46675">MAPVEHVVADAGAFLRHAALQDIGKNIYTIREVVTEIRDKATRRRLAVLPYELRFKEPLPEYVRLVTEFSKKTGDYPSLSATDIQVLALTYQLEAEFVGVSHLKQEPQKVKVSSSIQHPETPLHISGFHLPYKPKPPQETEKGHSACEPENLEFSSFMFWRNPLPNIDHELQELLIDRGEDVPSEEEEEEENGFEDRKDDSDDDGGGWITPSNIKQIQQELEQCDVPEDVRVGCLTTDFAMQNVLLQMGLHVLAVNGMLIREARSYILRCHGCFKTTSDMSRVFCSHCGNKTLKKVSVTVSDDGTLHMHFSRNPKVLNPRGLRYSLPTPKGGKYAINPHLTEDQRFPQLRLSQKARQKTNVFAPDYIAGVSPFVENDISSRSATLQVRDSTLGAGRRRLNPNASRKKFVKKR</sequence>
<evidence type="ECO:0000250" key="1">
    <source>
        <dbReference type="UniProtKB" id="Q9FLL1"/>
    </source>
</evidence>
<evidence type="ECO:0000255" key="2"/>
<evidence type="ECO:0000256" key="3">
    <source>
        <dbReference type="SAM" id="MobiDB-lite"/>
    </source>
</evidence>
<evidence type="ECO:0000269" key="4">
    <source>
    </source>
</evidence>
<evidence type="ECO:0000269" key="5">
    <source>
    </source>
</evidence>
<evidence type="ECO:0000269" key="6">
    <source>
    </source>
</evidence>
<evidence type="ECO:0000269" key="7">
    <source>
    </source>
</evidence>
<evidence type="ECO:0000269" key="8">
    <source ref="5"/>
</evidence>
<evidence type="ECO:0000305" key="9"/>
<evidence type="ECO:0000305" key="10">
    <source>
    </source>
</evidence>
<evidence type="ECO:0007744" key="11">
    <source>
        <dbReference type="PDB" id="6G18"/>
    </source>
</evidence>
<evidence type="ECO:0007744" key="12">
    <source>
        <dbReference type="PDB" id="6G5I"/>
    </source>
</evidence>
<evidence type="ECO:0007744" key="13">
    <source>
    </source>
</evidence>
<evidence type="ECO:0007744" key="14">
    <source>
    </source>
</evidence>
<evidence type="ECO:0007744" key="15">
    <source>
    </source>
</evidence>
<evidence type="ECO:0007744" key="16">
    <source>
    </source>
</evidence>
<evidence type="ECO:0007744" key="17">
    <source>
    </source>
</evidence>
<evidence type="ECO:0007744" key="18">
    <source>
    </source>
</evidence>
<evidence type="ECO:0007744" key="19">
    <source>
    </source>
</evidence>
<evidence type="ECO:0007744" key="20">
    <source>
    </source>
</evidence>
<evidence type="ECO:0007829" key="21">
    <source>
        <dbReference type="PDB" id="6ZUO"/>
    </source>
</evidence>
<evidence type="ECO:0007829" key="22">
    <source>
        <dbReference type="PDB" id="6ZXE"/>
    </source>
</evidence>
<evidence type="ECO:0007829" key="23">
    <source>
        <dbReference type="PDB" id="7WTX"/>
    </source>
</evidence>
<evidence type="ECO:0007829" key="24">
    <source>
        <dbReference type="PDB" id="7WTZ"/>
    </source>
</evidence>
<evidence type="ECO:0007829" key="25">
    <source>
        <dbReference type="PDB" id="7WU0"/>
    </source>
</evidence>